<keyword id="KW-0217">Developmental protein</keyword>
<keyword id="KW-0238">DNA-binding</keyword>
<keyword id="KW-0371">Homeobox</keyword>
<keyword id="KW-0539">Nucleus</keyword>
<keyword id="KW-0804">Transcription</keyword>
<keyword id="KW-0805">Transcription regulation</keyword>
<gene>
    <name type="primary">HOXD13</name>
</gene>
<feature type="chain" id="PRO_0000200243" description="Homeobox protein Hox-D13">
    <location>
        <begin position="1"/>
        <end position="333"/>
    </location>
</feature>
<feature type="DNA-binding region" description="Homeobox" evidence="3">
    <location>
        <begin position="266"/>
        <end position="325"/>
    </location>
</feature>
<feature type="region of interest" description="Disordered" evidence="4">
    <location>
        <begin position="1"/>
        <end position="24"/>
    </location>
</feature>
<feature type="compositionally biased region" description="Low complexity" evidence="4">
    <location>
        <begin position="12"/>
        <end position="24"/>
    </location>
</feature>
<proteinExistence type="inferred from homology"/>
<accession>Q5EU41</accession>
<dbReference type="EMBL" id="AY744676">
    <property type="protein sequence ID" value="AAW66480.1"/>
    <property type="molecule type" value="Genomic_DNA"/>
</dbReference>
<dbReference type="SMR" id="Q5EU41"/>
<dbReference type="GO" id="GO:0005634">
    <property type="term" value="C:nucleus"/>
    <property type="evidence" value="ECO:0007669"/>
    <property type="project" value="UniProtKB-SubCell"/>
</dbReference>
<dbReference type="GO" id="GO:0003677">
    <property type="term" value="F:DNA binding"/>
    <property type="evidence" value="ECO:0007669"/>
    <property type="project" value="UniProtKB-KW"/>
</dbReference>
<dbReference type="GO" id="GO:0001228">
    <property type="term" value="F:DNA-binding transcription activator activity, RNA polymerase II-specific"/>
    <property type="evidence" value="ECO:0000250"/>
    <property type="project" value="UniProtKB"/>
</dbReference>
<dbReference type="GO" id="GO:0003700">
    <property type="term" value="F:DNA-binding transcription factor activity"/>
    <property type="evidence" value="ECO:0000250"/>
    <property type="project" value="UniProtKB"/>
</dbReference>
<dbReference type="GO" id="GO:0045944">
    <property type="term" value="P:positive regulation of transcription by RNA polymerase II"/>
    <property type="evidence" value="ECO:0000250"/>
    <property type="project" value="UniProtKB"/>
</dbReference>
<dbReference type="CDD" id="cd00086">
    <property type="entry name" value="homeodomain"/>
    <property type="match status" value="1"/>
</dbReference>
<dbReference type="FunFam" id="1.10.10.60:FF:000084">
    <property type="entry name" value="Homeobox protein Hox-D13"/>
    <property type="match status" value="1"/>
</dbReference>
<dbReference type="Gene3D" id="1.10.10.60">
    <property type="entry name" value="Homeodomain-like"/>
    <property type="match status" value="1"/>
</dbReference>
<dbReference type="InterPro" id="IPR051003">
    <property type="entry name" value="AP_axis_regulatory_Homeobox"/>
</dbReference>
<dbReference type="InterPro" id="IPR001356">
    <property type="entry name" value="HD"/>
</dbReference>
<dbReference type="InterPro" id="IPR017970">
    <property type="entry name" value="Homeobox_CS"/>
</dbReference>
<dbReference type="InterPro" id="IPR009057">
    <property type="entry name" value="Homeodomain-like_sf"/>
</dbReference>
<dbReference type="InterPro" id="IPR022067">
    <property type="entry name" value="HoxA13_N"/>
</dbReference>
<dbReference type="PANTHER" id="PTHR45804:SF4">
    <property type="entry name" value="HOMEOBOX PROTEIN HOX-D13"/>
    <property type="match status" value="1"/>
</dbReference>
<dbReference type="PANTHER" id="PTHR45804">
    <property type="entry name" value="SEGMENTATION PROTEIN FUSHI TARAZU-LIKE PROTEIN"/>
    <property type="match status" value="1"/>
</dbReference>
<dbReference type="Pfam" id="PF00046">
    <property type="entry name" value="Homeodomain"/>
    <property type="match status" value="1"/>
</dbReference>
<dbReference type="Pfam" id="PF12284">
    <property type="entry name" value="HoxA13_N"/>
    <property type="match status" value="1"/>
</dbReference>
<dbReference type="SMART" id="SM00389">
    <property type="entry name" value="HOX"/>
    <property type="match status" value="1"/>
</dbReference>
<dbReference type="SUPFAM" id="SSF46689">
    <property type="entry name" value="Homeodomain-like"/>
    <property type="match status" value="1"/>
</dbReference>
<dbReference type="PROSITE" id="PS00027">
    <property type="entry name" value="HOMEOBOX_1"/>
    <property type="match status" value="1"/>
</dbReference>
<dbReference type="PROSITE" id="PS50071">
    <property type="entry name" value="HOMEOBOX_2"/>
    <property type="match status" value="1"/>
</dbReference>
<evidence type="ECO:0000250" key="1">
    <source>
        <dbReference type="UniProtKB" id="P24344"/>
    </source>
</evidence>
<evidence type="ECO:0000250" key="2">
    <source>
        <dbReference type="UniProtKB" id="P70217"/>
    </source>
</evidence>
<evidence type="ECO:0000255" key="3">
    <source>
        <dbReference type="PROSITE-ProRule" id="PRU00108"/>
    </source>
</evidence>
<evidence type="ECO:0000256" key="4">
    <source>
        <dbReference type="SAM" id="MobiDB-lite"/>
    </source>
</evidence>
<evidence type="ECO:0000305" key="5"/>
<organism>
    <name type="scientific">Carollia perspicillata</name>
    <name type="common">Seba's short-tailed bat</name>
    <dbReference type="NCBI Taxonomy" id="40233"/>
    <lineage>
        <taxon>Eukaryota</taxon>
        <taxon>Metazoa</taxon>
        <taxon>Chordata</taxon>
        <taxon>Craniata</taxon>
        <taxon>Vertebrata</taxon>
        <taxon>Euteleostomi</taxon>
        <taxon>Mammalia</taxon>
        <taxon>Eutheria</taxon>
        <taxon>Laurasiatheria</taxon>
        <taxon>Chiroptera</taxon>
        <taxon>Yangochiroptera</taxon>
        <taxon>Phyllostomidae</taxon>
        <taxon>Carolliinae</taxon>
        <taxon>Carollia</taxon>
    </lineage>
</organism>
<comment type="function">
    <text evidence="1">Sequence-specific transcription factor that binds gene promoters and activates their transcription. Part of a developmental regulatory system that provides cells with specific positional identities on the anterior-posterior axis.</text>
</comment>
<comment type="subcellular location">
    <subcellularLocation>
        <location evidence="2">Nucleus</location>
    </subcellularLocation>
</comment>
<comment type="similarity">
    <text evidence="5">Belongs to the Abd-B homeobox family.</text>
</comment>
<sequence length="333" mass="35042">MDGLRTDGGAAGAAPASSSSSSSVAAAAPGQCRGFLSAPVFAGTHSGRAAAAAAAAAAAAAAASGFAYPGTSERAGSASSSSSSAVVAARPEAPSAKECPAPGTAATAPPGAPALGYGYHFGNGYYSCRMSHGVGLQQNALKSSPHSSLGGFPVEKYMDVSGLASSSVPANEVPARAKEVSFYQGYTSPYQHVPGYIDMVSTFGSGEPRHEAYISMEGYQSWTLANGWNSQVYCAKDQPQGSHFWKSSFPGDVALNQPDMCVYRRGRKKRVPYTKLQLKELENEYAINKFINKDKRRRISAATNLSERQVTIWFQNRRVKDKKIVSKLKDTVS</sequence>
<reference key="1">
    <citation type="journal article" date="2005" name="Evol. Dev.">
        <title>Hoxd13 expression in the developing limbs of the short-tailed fruit bat, Carollia perspicillata.</title>
        <authorList>
            <person name="Chen C.-H."/>
            <person name="Cretekos C.J."/>
            <person name="Rasweiler J.J. IV"/>
            <person name="Behringer R.R."/>
        </authorList>
    </citation>
    <scope>NUCLEOTIDE SEQUENCE [GENOMIC DNA]</scope>
</reference>
<protein>
    <recommendedName>
        <fullName>Homeobox protein Hox-D13</fullName>
    </recommendedName>
</protein>
<name>HXD13_CARPS</name>